<organism>
    <name type="scientific">Saccharomyces cerevisiae (strain ATCC 204508 / S288c)</name>
    <name type="common">Baker's yeast</name>
    <dbReference type="NCBI Taxonomy" id="559292"/>
    <lineage>
        <taxon>Eukaryota</taxon>
        <taxon>Fungi</taxon>
        <taxon>Dikarya</taxon>
        <taxon>Ascomycota</taxon>
        <taxon>Saccharomycotina</taxon>
        <taxon>Saccharomycetes</taxon>
        <taxon>Saccharomycetales</taxon>
        <taxon>Saccharomycetaceae</taxon>
        <taxon>Saccharomyces</taxon>
    </lineage>
</organism>
<comment type="function">
    <text evidence="7 8 10 11 12 13 14 15 16 17 18">Sorting nexin, involved in the separation or division of vacuoles throughout the entire life cycle of the cells (PubMed:12048214, PubMed:12554655, PubMed:15800066, PubMed:17420293, PubMed:18818209, PubMed:19793921, PubMed:20729555, PubMed:20861302, PubMed:21429936, PubMed:8663607). Involved in retrieval of late-Golgi SNAREs from post-Golgi endosomes to the trans-Golgi network, for cytoplasm to vacuole transport (Cvt), and autophagy of large cargos including mitophagy, pexophagy and glycophagy (PubMed:12048214, PubMed:12554655, PubMed:15800066, PubMed:17420293, PubMed:18818209, PubMed:19793921, PubMed:20729555, PubMed:20861302, PubMed:21429936, PubMed:38832010, PubMed:8663607). Involved in proper sorting of the v-SNARE protein SNC1 (PubMed:12554655).</text>
</comment>
<comment type="subunit">
    <text evidence="7 8">Forms a complex with ATG20 and ATG17 (PubMed:12048214). Binds also to SNC1 and SNX41 (PubMed:12554655).</text>
</comment>
<comment type="interaction">
    <interactant intactId="EBI-17610">
        <id>P47057</id>
    </interactant>
    <interactant intactId="EBI-30856">
        <id>Q06410</id>
        <label>ATG17</label>
    </interactant>
    <organismsDiffer>false</organismsDiffer>
    <experiments>2</experiments>
</comment>
<comment type="interaction">
    <interactant intactId="EBI-17610">
        <id>P47057</id>
    </interactant>
    <interactant intactId="EBI-36894">
        <id>Q07528</id>
        <label>ATG20</label>
    </interactant>
    <organismsDiffer>false</organismsDiffer>
    <experiments>8</experiments>
</comment>
<comment type="interaction">
    <interactant intactId="EBI-17610">
        <id>P47057</id>
    </interactant>
    <interactant intactId="EBI-30464">
        <id>Q04053</id>
        <label>SNX41</label>
    </interactant>
    <organismsDiffer>false</organismsDiffer>
    <experiments>8</experiments>
</comment>
<comment type="subcellular location">
    <subcellularLocation>
        <location evidence="7">Cytoplasm</location>
        <location evidence="7">Cytosol</location>
    </subcellularLocation>
    <subcellularLocation>
        <location evidence="7">Preautophagosomal structure membrane</location>
        <topology evidence="7">Peripheral membrane protein</topology>
    </subcellularLocation>
    <subcellularLocation>
        <location evidence="11">Endosome membrane</location>
        <topology evidence="7">Peripheral membrane protein</topology>
    </subcellularLocation>
    <text evidence="7 11">Endosome and other perivacuolar punctate structures (PubMed:17420293). Associates to phosphatidylinositol 3-phosphate, necessary for peripheral membrane localization to the perivacuolar punctate structures (PubMed:12048214).</text>
</comment>
<comment type="domain">
    <text evidence="3">The PX domain binds phosphatidylinositol 3-phosphate which is necessary for peripheral membrane localization to the perivacuolar punctate structures.</text>
</comment>
<comment type="miscellaneous">
    <text evidence="9">Present with 358 molecules/cell in log phase SD medium.</text>
</comment>
<comment type="similarity">
    <text evidence="22">Belongs to the sorting nexin family.</text>
</comment>
<comment type="sequence caution" evidence="22">
    <conflict type="frameshift">
        <sequence resource="EMBL-CDS" id="CAA88260"/>
    </conflict>
</comment>
<accession>P47057</accession>
<accession>D6VWE7</accession>
<accession>Q06794</accession>
<reference key="1">
    <citation type="submission" date="1995-02" db="EMBL/GenBank/DDBJ databases">
        <authorList>
            <person name="Sora S."/>
            <person name="Tiboni O."/>
            <person name="Sanangelantoni A.M."/>
        </authorList>
    </citation>
    <scope>NUCLEOTIDE SEQUENCE [GENOMIC DNA]</scope>
</reference>
<reference key="2">
    <citation type="journal article" date="1996" name="EMBO J.">
        <title>Complete nucleotide sequence of Saccharomyces cerevisiae chromosome X.</title>
        <authorList>
            <person name="Galibert F."/>
            <person name="Alexandraki D."/>
            <person name="Baur A."/>
            <person name="Boles E."/>
            <person name="Chalwatzis N."/>
            <person name="Chuat J.-C."/>
            <person name="Coster F."/>
            <person name="Cziepluch C."/>
            <person name="de Haan M."/>
            <person name="Domdey H."/>
            <person name="Durand P."/>
            <person name="Entian K.-D."/>
            <person name="Gatius M."/>
            <person name="Goffeau A."/>
            <person name="Grivell L.A."/>
            <person name="Hennemann A."/>
            <person name="Herbert C.J."/>
            <person name="Heumann K."/>
            <person name="Hilger F."/>
            <person name="Hollenberg C.P."/>
            <person name="Huang M.-E."/>
            <person name="Jacq C."/>
            <person name="Jauniaux J.-C."/>
            <person name="Katsoulou C."/>
            <person name="Kirchrath L."/>
            <person name="Kleine K."/>
            <person name="Kordes E."/>
            <person name="Koetter P."/>
            <person name="Liebl S."/>
            <person name="Louis E.J."/>
            <person name="Manus V."/>
            <person name="Mewes H.-W."/>
            <person name="Miosga T."/>
            <person name="Obermaier B."/>
            <person name="Perea J."/>
            <person name="Pohl T.M."/>
            <person name="Portetelle D."/>
            <person name="Pujol A."/>
            <person name="Purnelle B."/>
            <person name="Ramezani Rad M."/>
            <person name="Rasmussen S.W."/>
            <person name="Rose M."/>
            <person name="Rossau R."/>
            <person name="Schaaff-Gerstenschlaeger I."/>
            <person name="Smits P.H.M."/>
            <person name="Scarcez T."/>
            <person name="Soriano N."/>
            <person name="To Van D."/>
            <person name="Tzermia M."/>
            <person name="Van Broekhoven A."/>
            <person name="Vandenbol M."/>
            <person name="Wedler H."/>
            <person name="von Wettstein D."/>
            <person name="Wambutt R."/>
            <person name="Zagulski M."/>
            <person name="Zollner A."/>
            <person name="Karpfinger-Hartl L."/>
        </authorList>
    </citation>
    <scope>NUCLEOTIDE SEQUENCE [LARGE SCALE GENOMIC DNA]</scope>
    <source>
        <strain>ATCC 204508 / S288c</strain>
    </source>
</reference>
<reference key="3">
    <citation type="journal article" date="2014" name="G3 (Bethesda)">
        <title>The reference genome sequence of Saccharomyces cerevisiae: Then and now.</title>
        <authorList>
            <person name="Engel S.R."/>
            <person name="Dietrich F.S."/>
            <person name="Fisk D.G."/>
            <person name="Binkley G."/>
            <person name="Balakrishnan R."/>
            <person name="Costanzo M.C."/>
            <person name="Dwight S.S."/>
            <person name="Hitz B.C."/>
            <person name="Karra K."/>
            <person name="Nash R.S."/>
            <person name="Weng S."/>
            <person name="Wong E.D."/>
            <person name="Lloyd P."/>
            <person name="Skrzypek M.S."/>
            <person name="Miyasato S.R."/>
            <person name="Simison M."/>
            <person name="Cherry J.M."/>
        </authorList>
    </citation>
    <scope>GENOME REANNOTATION</scope>
    <source>
        <strain>ATCC 204508 / S288c</strain>
    </source>
</reference>
<reference key="4">
    <citation type="journal article" date="2007" name="Genome Res.">
        <title>Approaching a complete repository of sequence-verified protein-encoding clones for Saccharomyces cerevisiae.</title>
        <authorList>
            <person name="Hu Y."/>
            <person name="Rolfs A."/>
            <person name="Bhullar B."/>
            <person name="Murthy T.V.S."/>
            <person name="Zhu C."/>
            <person name="Berger M.F."/>
            <person name="Camargo A.A."/>
            <person name="Kelley F."/>
            <person name="McCarron S."/>
            <person name="Jepson D."/>
            <person name="Richardson A."/>
            <person name="Raphael J."/>
            <person name="Moreira D."/>
            <person name="Taycher E."/>
            <person name="Zuo D."/>
            <person name="Mohr S."/>
            <person name="Kane M.F."/>
            <person name="Williamson J."/>
            <person name="Simpson A.J.G."/>
            <person name="Bulyk M.L."/>
            <person name="Harlow E."/>
            <person name="Marsischky G."/>
            <person name="Kolodner R.D."/>
            <person name="LaBaer J."/>
        </authorList>
    </citation>
    <scope>NUCLEOTIDE SEQUENCE [GENOMIC DNA]</scope>
    <source>
        <strain>ATCC 204508 / S288c</strain>
    </source>
</reference>
<reference key="5">
    <citation type="journal article" date="1996" name="J. Biol. Chem.">
        <title>Genetic and phenotypic overlap between autophagy and the cytoplasm to vacuole protein targeting pathway.</title>
        <authorList>
            <person name="Harding T.M."/>
            <person name="Hefner-Gravink A."/>
            <person name="Thumm M."/>
            <person name="Klionsky D.J."/>
        </authorList>
    </citation>
    <scope>FUNCTION</scope>
</reference>
<reference key="6">
    <citation type="journal article" date="2002" name="J. Biol. Chem.">
        <title>Cooperative binding of the cytoplasm to vacuole targeting pathway proteins, Cvt13 and Cvt20, to phosphatidylinositol 3-phosphate at the pre-autophagosomal structure is required for selective autophagy.</title>
        <authorList>
            <person name="Nice D.C. III"/>
            <person name="Sato T.K."/>
            <person name="Stromhaug P.E."/>
            <person name="Emr S.D."/>
            <person name="Klionsky D.J."/>
        </authorList>
    </citation>
    <scope>FUNCTION</scope>
    <scope>SUBCELLULAR LOCATION</scope>
    <scope>INTERACTION WITH ATG17 AND ATG20</scope>
    <scope>MUTAGENESIS OF TYR-79</scope>
</reference>
<reference key="7">
    <citation type="journal article" date="2003" name="Dev. Cell">
        <title>A unified nomenclature for yeast autophagy-related genes.</title>
        <authorList>
            <person name="Klionsky D.J."/>
            <person name="Cregg J.M."/>
            <person name="Dunn W.A. Jr."/>
            <person name="Emr S.D."/>
            <person name="Sakai Y."/>
            <person name="Sandoval I.V."/>
            <person name="Sibirny A."/>
            <person name="Subramani S."/>
            <person name="Thumm M."/>
            <person name="Veenhuis M."/>
            <person name="Ohsumi Y."/>
        </authorList>
    </citation>
    <scope>NOMENCLATURE</scope>
</reference>
<reference key="8">
    <citation type="journal article" date="2003" name="EMBO J.">
        <title>Retromer and the sorting nexins Snx4/41/42 mediate distinct retrieval pathways from yeast endosomes.</title>
        <authorList>
            <person name="Hettema E.H."/>
            <person name="Lewis M.J."/>
            <person name="Black M.W."/>
            <person name="Pelham H.R.B."/>
        </authorList>
    </citation>
    <scope>FUNCTION</scope>
    <scope>INTERACTION WITH SNX41 AND SNC1</scope>
</reference>
<reference key="9">
    <citation type="journal article" date="2003" name="Nature">
        <title>Global analysis of protein localization in budding yeast.</title>
        <authorList>
            <person name="Huh W.-K."/>
            <person name="Falvo J.V."/>
            <person name="Gerke L.C."/>
            <person name="Carroll A.S."/>
            <person name="Howson R.W."/>
            <person name="Weissman J.S."/>
            <person name="O'Shea E.K."/>
        </authorList>
    </citation>
    <scope>SUBCELLULAR LOCATION [LARGE SCALE ANALYSIS]</scope>
</reference>
<reference key="10">
    <citation type="journal article" date="2003" name="Nature">
        <title>Global analysis of protein expression in yeast.</title>
        <authorList>
            <person name="Ghaemmaghami S."/>
            <person name="Huh W.-K."/>
            <person name="Bower K."/>
            <person name="Howson R.W."/>
            <person name="Belle A."/>
            <person name="Dephoure N."/>
            <person name="O'Shea E.K."/>
            <person name="Weissman J.S."/>
        </authorList>
    </citation>
    <scope>LEVEL OF PROTEIN EXPRESSION [LARGE SCALE ANALYSIS]</scope>
</reference>
<reference key="11">
    <citation type="journal article" date="2005" name="Mol. Biol. Cell">
        <title>Control of Ste6 recycling by ubiquitination in the early endocytic pathway in yeast.</title>
        <authorList>
            <person name="Krsmanovic T."/>
            <person name="Pawelec A."/>
            <person name="Sydor T."/>
            <person name="Kolling R."/>
        </authorList>
    </citation>
    <scope>FUNCTION</scope>
</reference>
<reference key="12">
    <citation type="journal article" date="2007" name="J. Cell Biol.">
        <title>Grd19/Snx3p functions as a cargo-specific adapter for retromer-dependent endocytic recycling.</title>
        <authorList>
            <person name="Strochlic T.I."/>
            <person name="Setty T.G."/>
            <person name="Sitaram A."/>
            <person name="Burd C.G."/>
        </authorList>
    </citation>
    <scope>FUNCTION</scope>
    <scope>SUBCELLULAR LOCATION</scope>
</reference>
<reference key="13">
    <citation type="journal article" date="2008" name="J. Biol. Chem.">
        <title>Mitophagy in yeast occurs through a selective mechanism.</title>
        <authorList>
            <person name="Kanki T."/>
            <person name="Klionsky D.J."/>
        </authorList>
    </citation>
    <scope>FUNCTION</scope>
</reference>
<reference key="14">
    <citation type="journal article" date="2009" name="Mol. Biol. Cell">
        <title>A genomic screen for yeast mutants defective in selective mitochondria autophagy.</title>
        <authorList>
            <person name="Kanki T."/>
            <person name="Wang K."/>
            <person name="Baba M."/>
            <person name="Bartholomew C.R."/>
            <person name="Lynch-Day M.A."/>
            <person name="Du Z."/>
            <person name="Geng J."/>
            <person name="Mao K."/>
            <person name="Yang Z."/>
            <person name="Yen W.L."/>
            <person name="Klionsky D.J."/>
        </authorList>
    </citation>
    <scope>FUNCTION</scope>
</reference>
<reference key="15">
    <citation type="journal article" date="2010" name="Mol. Biol. Cell">
        <title>Membrane delivery to the yeast autophagosome from the Golgi-endosomal system.</title>
        <authorList>
            <person name="Ohashi Y."/>
            <person name="Munro S."/>
        </authorList>
    </citation>
    <scope>FUNCTION</scope>
</reference>
<reference key="16">
    <citation type="journal article" date="2010" name="J. Biol. Chem.">
        <title>Lipid binding requirements for oxysterol-binding protein Kes1 inhibition of autophagy and endosome-trans-Golgi trafficking pathways.</title>
        <authorList>
            <person name="LeBlanc M.A."/>
            <person name="McMaster C.R."/>
        </authorList>
    </citation>
    <scope>FUNCTION</scope>
</reference>
<reference key="17">
    <citation type="journal article" date="2011" name="J. Cell Sci.">
        <title>Mitophagy in yeast is independent of mitochondrial fission and requires the stress response gene WHI2.</title>
        <authorList>
            <person name="Mendl N."/>
            <person name="Occhipinti A."/>
            <person name="Muller M."/>
            <person name="Wild P."/>
            <person name="Dikic I."/>
            <person name="Reichert A.S."/>
        </authorList>
    </citation>
    <scope>FUNCTION</scope>
</reference>
<reference key="18">
    <citation type="journal article" date="2024" name="IScience">
        <title>Atg45 is an autophagy receptor for glycogen, a non-preferred cargo of bulk autophagy in yeast.</title>
        <authorList>
            <person name="Isoda T."/>
            <person name="Takeda E."/>
            <person name="Hosokawa S."/>
            <person name="Hotta-Ren S."/>
            <person name="Ohsumi Y."/>
        </authorList>
    </citation>
    <scope>FUNCTION</scope>
</reference>
<dbReference type="EMBL" id="Z48229">
    <property type="protein sequence ID" value="CAA88260.1"/>
    <property type="status" value="ALT_FRAME"/>
    <property type="molecule type" value="Genomic_DNA"/>
</dbReference>
<dbReference type="EMBL" id="Z49311">
    <property type="protein sequence ID" value="CAA89327.1"/>
    <property type="molecule type" value="Genomic_DNA"/>
</dbReference>
<dbReference type="EMBL" id="AY693177">
    <property type="protein sequence ID" value="AAT93196.1"/>
    <property type="molecule type" value="Genomic_DNA"/>
</dbReference>
<dbReference type="EMBL" id="BK006943">
    <property type="protein sequence ID" value="DAA08763.1"/>
    <property type="molecule type" value="Genomic_DNA"/>
</dbReference>
<dbReference type="PIR" id="S56808">
    <property type="entry name" value="S56808"/>
</dbReference>
<dbReference type="RefSeq" id="NP_012498.1">
    <property type="nucleotide sequence ID" value="NM_001181470.1"/>
</dbReference>
<dbReference type="SMR" id="P47057"/>
<dbReference type="BioGRID" id="33724">
    <property type="interactions" value="352"/>
</dbReference>
<dbReference type="ComplexPortal" id="CPX-1377">
    <property type="entry name" value="SNX4-ATG20 sorting nexin complex"/>
</dbReference>
<dbReference type="ComplexPortal" id="CPX-1378">
    <property type="entry name" value="SNX4-SNX41 sorting nexin complex"/>
</dbReference>
<dbReference type="DIP" id="DIP-2707N"/>
<dbReference type="FunCoup" id="P47057">
    <property type="interactions" value="650"/>
</dbReference>
<dbReference type="IntAct" id="P47057">
    <property type="interactions" value="26"/>
</dbReference>
<dbReference type="MINT" id="P47057"/>
<dbReference type="STRING" id="4932.YJL036W"/>
<dbReference type="iPTMnet" id="P47057"/>
<dbReference type="PaxDb" id="4932-YJL036W"/>
<dbReference type="PeptideAtlas" id="P47057"/>
<dbReference type="EnsemblFungi" id="YJL036W_mRNA">
    <property type="protein sequence ID" value="YJL036W"/>
    <property type="gene ID" value="YJL036W"/>
</dbReference>
<dbReference type="GeneID" id="853416"/>
<dbReference type="KEGG" id="sce:YJL036W"/>
<dbReference type="AGR" id="SGD:S000003573"/>
<dbReference type="SGD" id="S000003573">
    <property type="gene designation" value="SNX4"/>
</dbReference>
<dbReference type="VEuPathDB" id="FungiDB:YJL036W"/>
<dbReference type="eggNOG" id="KOG2273">
    <property type="taxonomic scope" value="Eukaryota"/>
</dbReference>
<dbReference type="HOGENOM" id="CLU_027221_0_0_1"/>
<dbReference type="InParanoid" id="P47057"/>
<dbReference type="OMA" id="LQKSGHY"/>
<dbReference type="OrthoDB" id="205639at2759"/>
<dbReference type="BioCyc" id="YEAST:G3O-31502-MONOMER"/>
<dbReference type="BioGRID-ORCS" id="853416">
    <property type="hits" value="1 hit in 10 CRISPR screens"/>
</dbReference>
<dbReference type="PRO" id="PR:P47057"/>
<dbReference type="Proteomes" id="UP000002311">
    <property type="component" value="Chromosome X"/>
</dbReference>
<dbReference type="RNAct" id="P47057">
    <property type="molecule type" value="protein"/>
</dbReference>
<dbReference type="GO" id="GO:0010009">
    <property type="term" value="C:cytoplasmic side of endosome membrane"/>
    <property type="evidence" value="ECO:0000314"/>
    <property type="project" value="ComplexPortal"/>
</dbReference>
<dbReference type="GO" id="GO:0005829">
    <property type="term" value="C:cytosol"/>
    <property type="evidence" value="ECO:0000314"/>
    <property type="project" value="SGD"/>
</dbReference>
<dbReference type="GO" id="GO:0005769">
    <property type="term" value="C:early endosome"/>
    <property type="evidence" value="ECO:0000314"/>
    <property type="project" value="SGD"/>
</dbReference>
<dbReference type="GO" id="GO:0048471">
    <property type="term" value="C:perinuclear region of cytoplasm"/>
    <property type="evidence" value="ECO:0000314"/>
    <property type="project" value="SGD"/>
</dbReference>
<dbReference type="GO" id="GO:0000407">
    <property type="term" value="C:phagophore assembly site"/>
    <property type="evidence" value="ECO:0000314"/>
    <property type="project" value="SGD"/>
</dbReference>
<dbReference type="GO" id="GO:0034045">
    <property type="term" value="C:phagophore assembly site membrane"/>
    <property type="evidence" value="ECO:0007669"/>
    <property type="project" value="UniProtKB-SubCell"/>
</dbReference>
<dbReference type="GO" id="GO:0032266">
    <property type="term" value="F:phosphatidylinositol-3-phosphate binding"/>
    <property type="evidence" value="ECO:0000314"/>
    <property type="project" value="SGD"/>
</dbReference>
<dbReference type="GO" id="GO:0000422">
    <property type="term" value="P:autophagy of mitochondrion"/>
    <property type="evidence" value="ECO:0000315"/>
    <property type="project" value="SGD"/>
</dbReference>
<dbReference type="GO" id="GO:0032258">
    <property type="term" value="P:cytoplasm to vacuole targeting by the Cvt pathway"/>
    <property type="evidence" value="ECO:0000315"/>
    <property type="project" value="SGD"/>
</dbReference>
<dbReference type="GO" id="GO:0034498">
    <property type="term" value="P:early endosome to Golgi transport"/>
    <property type="evidence" value="ECO:0000315"/>
    <property type="project" value="SGD"/>
</dbReference>
<dbReference type="GO" id="GO:0032456">
    <property type="term" value="P:endocytic recycling"/>
    <property type="evidence" value="ECO:0000315"/>
    <property type="project" value="SGD"/>
</dbReference>
<dbReference type="GO" id="GO:0061723">
    <property type="term" value="P:glycophagy"/>
    <property type="evidence" value="ECO:0000315"/>
    <property type="project" value="SGD"/>
</dbReference>
<dbReference type="GO" id="GO:0006886">
    <property type="term" value="P:intracellular protein transport"/>
    <property type="evidence" value="ECO:0000314"/>
    <property type="project" value="ComplexPortal"/>
</dbReference>
<dbReference type="GO" id="GO:0016236">
    <property type="term" value="P:macroautophagy"/>
    <property type="evidence" value="ECO:0000314"/>
    <property type="project" value="ComplexPortal"/>
</dbReference>
<dbReference type="GO" id="GO:0000423">
    <property type="term" value="P:mitophagy"/>
    <property type="evidence" value="ECO:0000318"/>
    <property type="project" value="GO_Central"/>
</dbReference>
<dbReference type="GO" id="GO:0034727">
    <property type="term" value="P:piecemeal microautophagy of the nucleus"/>
    <property type="evidence" value="ECO:0000315"/>
    <property type="project" value="SGD"/>
</dbReference>
<dbReference type="GO" id="GO:0036010">
    <property type="term" value="P:protein localization to endosome"/>
    <property type="evidence" value="ECO:0000316"/>
    <property type="project" value="SGD"/>
</dbReference>
<dbReference type="GO" id="GO:0006623">
    <property type="term" value="P:protein targeting to vacuole"/>
    <property type="evidence" value="ECO:0000315"/>
    <property type="project" value="SGD"/>
</dbReference>
<dbReference type="GO" id="GO:0015031">
    <property type="term" value="P:protein transport"/>
    <property type="evidence" value="ECO:0000318"/>
    <property type="project" value="GO_Central"/>
</dbReference>
<dbReference type="GO" id="GO:0061709">
    <property type="term" value="P:reticulophagy"/>
    <property type="evidence" value="ECO:0000318"/>
    <property type="project" value="GO_Central"/>
</dbReference>
<dbReference type="GO" id="GO:0042147">
    <property type="term" value="P:retrograde transport, endosome to Golgi"/>
    <property type="evidence" value="ECO:0000314"/>
    <property type="project" value="ComplexPortal"/>
</dbReference>
<dbReference type="CDD" id="cd07628">
    <property type="entry name" value="BAR_Atg24p"/>
    <property type="match status" value="1"/>
</dbReference>
<dbReference type="FunFam" id="1.20.1270.60:FF:000090">
    <property type="entry name" value="Snx4p"/>
    <property type="match status" value="1"/>
</dbReference>
<dbReference type="FunFam" id="3.30.1520.10:FF:000057">
    <property type="entry name" value="Snx4p"/>
    <property type="match status" value="1"/>
</dbReference>
<dbReference type="Gene3D" id="1.20.1270.60">
    <property type="entry name" value="Arfaptin homology (AH) domain/BAR domain"/>
    <property type="match status" value="1"/>
</dbReference>
<dbReference type="Gene3D" id="3.30.1520.10">
    <property type="entry name" value="Phox-like domain"/>
    <property type="match status" value="1"/>
</dbReference>
<dbReference type="InterPro" id="IPR027267">
    <property type="entry name" value="AH/BAR_dom_sf"/>
</dbReference>
<dbReference type="InterPro" id="IPR001683">
    <property type="entry name" value="PX_dom"/>
</dbReference>
<dbReference type="InterPro" id="IPR036871">
    <property type="entry name" value="PX_dom_sf"/>
</dbReference>
<dbReference type="PANTHER" id="PTHR45949">
    <property type="entry name" value="SORTING NEXIN-4"/>
    <property type="match status" value="1"/>
</dbReference>
<dbReference type="PANTHER" id="PTHR45949:SF2">
    <property type="entry name" value="SORTING NEXIN-4"/>
    <property type="match status" value="1"/>
</dbReference>
<dbReference type="Pfam" id="PF00787">
    <property type="entry name" value="PX"/>
    <property type="match status" value="1"/>
</dbReference>
<dbReference type="SMART" id="SM00312">
    <property type="entry name" value="PX"/>
    <property type="match status" value="1"/>
</dbReference>
<dbReference type="SUPFAM" id="SSF103657">
    <property type="entry name" value="BAR/IMD domain-like"/>
    <property type="match status" value="1"/>
</dbReference>
<dbReference type="SUPFAM" id="SSF64268">
    <property type="entry name" value="PX domain"/>
    <property type="match status" value="1"/>
</dbReference>
<dbReference type="PROSITE" id="PS50195">
    <property type="entry name" value="PX"/>
    <property type="match status" value="1"/>
</dbReference>
<sequence>MTDKGKNDLTSKAKDKARGNPEKPPYWFEIIVSDPQKRTGDPGSSSGYVSYQISTKTNNTSFYDNRGDPESIIVVHRRYSDLLLLHDILLNRFPTCIIPPLPDKKVFQYIAGDRFSQRFTQKRCHSLQNFLRRVSLHPDLSQSKVFKTFLVSKDWESHRKVLQDSLQPNKDEVTDAFMNAFKTVHKQNEEFTEIREKSDKLDRTVTKIDKLFHKVVKKNDSMSEDYTKLGSNLQELQELVTGENEELAAKLKIFNEGVTQLSYGLQDLTKYLDYEYIVDLKDLEHYIDSMRQLIKLKDQKQIDYEELSDYLTRSIKEKNNLISGYGGSNFFANKLEELAGINQEASRREKINKLEGKITSLTGELENAKKVADGFEQECLKEIDHFESVKTAEIKKSLGSLADHHIEFYERILEAWEKVDDSL</sequence>
<protein>
    <recommendedName>
        <fullName evidence="19">Sorting nexin-4</fullName>
    </recommendedName>
    <alternativeName>
        <fullName evidence="20">Autophagy-related protein 24</fullName>
    </alternativeName>
    <alternativeName>
        <fullName evidence="21">Cytoplasm to vacuole targeting protein 13</fullName>
    </alternativeName>
</protein>
<gene>
    <name evidence="19 23" type="primary">SNX4</name>
    <name evidence="20" type="synonym">ATG24</name>
    <name evidence="21" type="synonym">CVT13</name>
    <name type="ordered locus">YJL036W</name>
    <name type="ORF">J1244</name>
</gene>
<name>SNX4_YEAST</name>
<keyword id="KW-0175">Coiled coil</keyword>
<keyword id="KW-0963">Cytoplasm</keyword>
<keyword id="KW-0967">Endosome</keyword>
<keyword id="KW-0446">Lipid-binding</keyword>
<keyword id="KW-0472">Membrane</keyword>
<keyword id="KW-0653">Protein transport</keyword>
<keyword id="KW-1185">Reference proteome</keyword>
<keyword id="KW-0813">Transport</keyword>
<evidence type="ECO:0000250" key="1">
    <source>
        <dbReference type="UniProtKB" id="Q3UR97"/>
    </source>
</evidence>
<evidence type="ECO:0000250" key="2">
    <source>
        <dbReference type="UniProtKB" id="Q6P4T1"/>
    </source>
</evidence>
<evidence type="ECO:0000250" key="3">
    <source>
        <dbReference type="UniProtKB" id="Q96L94"/>
    </source>
</evidence>
<evidence type="ECO:0000255" key="4"/>
<evidence type="ECO:0000255" key="5">
    <source>
        <dbReference type="PROSITE-ProRule" id="PRU00147"/>
    </source>
</evidence>
<evidence type="ECO:0000256" key="6">
    <source>
        <dbReference type="SAM" id="MobiDB-lite"/>
    </source>
</evidence>
<evidence type="ECO:0000269" key="7">
    <source>
    </source>
</evidence>
<evidence type="ECO:0000269" key="8">
    <source>
    </source>
</evidence>
<evidence type="ECO:0000269" key="9">
    <source>
    </source>
</evidence>
<evidence type="ECO:0000269" key="10">
    <source>
    </source>
</evidence>
<evidence type="ECO:0000269" key="11">
    <source>
    </source>
</evidence>
<evidence type="ECO:0000269" key="12">
    <source>
    </source>
</evidence>
<evidence type="ECO:0000269" key="13">
    <source>
    </source>
</evidence>
<evidence type="ECO:0000269" key="14">
    <source>
    </source>
</evidence>
<evidence type="ECO:0000269" key="15">
    <source>
    </source>
</evidence>
<evidence type="ECO:0000269" key="16">
    <source>
    </source>
</evidence>
<evidence type="ECO:0000269" key="17">
    <source>
    </source>
</evidence>
<evidence type="ECO:0000269" key="18">
    <source>
    </source>
</evidence>
<evidence type="ECO:0000303" key="19">
    <source>
    </source>
</evidence>
<evidence type="ECO:0000303" key="20">
    <source>
    </source>
</evidence>
<evidence type="ECO:0000303" key="21">
    <source>
    </source>
</evidence>
<evidence type="ECO:0000305" key="22"/>
<evidence type="ECO:0000312" key="23">
    <source>
        <dbReference type="SGD" id="S000003573"/>
    </source>
</evidence>
<feature type="chain" id="PRO_0000213818" description="Sorting nexin-4">
    <location>
        <begin position="1"/>
        <end position="423"/>
    </location>
</feature>
<feature type="domain" description="PX" evidence="5">
    <location>
        <begin position="29"/>
        <end position="157"/>
    </location>
</feature>
<feature type="region of interest" description="Disordered" evidence="6">
    <location>
        <begin position="1"/>
        <end position="25"/>
    </location>
</feature>
<feature type="coiled-coil region" evidence="4">
    <location>
        <begin position="217"/>
        <end position="252"/>
    </location>
</feature>
<feature type="coiled-coil region" evidence="4">
    <location>
        <begin position="346"/>
        <end position="381"/>
    </location>
</feature>
<feature type="compositionally biased region" description="Basic and acidic residues" evidence="6">
    <location>
        <begin position="1"/>
        <end position="21"/>
    </location>
</feature>
<feature type="binding site" evidence="1">
    <location>
        <position position="78"/>
    </location>
    <ligand>
        <name>a 1,2-diacyl-sn-glycero-3-phospho-(1D-myo-inositol-3-phosphate)</name>
        <dbReference type="ChEBI" id="CHEBI:58088"/>
    </ligand>
</feature>
<feature type="binding site" evidence="3">
    <location>
        <position position="80"/>
    </location>
    <ligand>
        <name>a 1,2-diacyl-sn-glycero-3-phospho-(1D-myo-inositol-3-phosphate)</name>
        <dbReference type="ChEBI" id="CHEBI:58088"/>
    </ligand>
</feature>
<feature type="binding site" evidence="3">
    <location>
        <position position="104"/>
    </location>
    <ligand>
        <name>a 1,2-diacyl-sn-glycero-3-phospho-(1D-myo-inositol-3-phosphate)</name>
        <dbReference type="ChEBI" id="CHEBI:58088"/>
    </ligand>
</feature>
<feature type="binding site" evidence="2">
    <location>
        <position position="123"/>
    </location>
    <ligand>
        <name>a 1,2-diacyl-sn-glycero-3-phospho-(1D-myo-inositol-3-phosphate)</name>
        <dbReference type="ChEBI" id="CHEBI:58088"/>
    </ligand>
</feature>
<feature type="mutagenesis site" description="Abolishes the intracellular punctate localization and decreases the cytoplasm to vacuole transport." evidence="7">
    <original>Y</original>
    <variation>A</variation>
    <location>
        <position position="79"/>
    </location>
</feature>
<feature type="sequence conflict" description="In Ref. 1; CAA88260." evidence="22" ref="1">
    <original>QLIKLKDQKQIDY</original>
    <variation>PDQIERPETDRL</variation>
    <location>
        <begin position="292"/>
        <end position="304"/>
    </location>
</feature>
<proteinExistence type="evidence at protein level"/>